<keyword id="KW-1003">Cell membrane</keyword>
<keyword id="KW-0472">Membrane</keyword>
<keyword id="KW-0812">Transmembrane</keyword>
<keyword id="KW-1133">Transmembrane helix</keyword>
<reference key="1">
    <citation type="journal article" date="2008" name="Genome Biol.">
        <title>Encapsulated in silica: genome, proteome and physiology of the thermophilic bacterium Anoxybacillus flavithermus WK1.</title>
        <authorList>
            <person name="Saw J.H."/>
            <person name="Mountain B.W."/>
            <person name="Feng L."/>
            <person name="Omelchenko M.V."/>
            <person name="Hou S."/>
            <person name="Saito J.A."/>
            <person name="Stott M.B."/>
            <person name="Li D."/>
            <person name="Zhao G."/>
            <person name="Wu J."/>
            <person name="Galperin M.Y."/>
            <person name="Koonin E.V."/>
            <person name="Makarova K.S."/>
            <person name="Wolf Y.I."/>
            <person name="Rigden D.J."/>
            <person name="Dunfield P.F."/>
            <person name="Wang L."/>
            <person name="Alam M."/>
        </authorList>
    </citation>
    <scope>NUCLEOTIDE SEQUENCE [LARGE SCALE GENOMIC DNA]</scope>
    <source>
        <strain>DSM 21510 / WK1</strain>
    </source>
</reference>
<feature type="chain" id="PRO_0000388816" description="UPF0756 membrane protein Aflv_0503">
    <location>
        <begin position="1"/>
        <end position="151"/>
    </location>
</feature>
<feature type="transmembrane region" description="Helical" evidence="1">
    <location>
        <begin position="4"/>
        <end position="24"/>
    </location>
</feature>
<feature type="transmembrane region" description="Helical" evidence="1">
    <location>
        <begin position="52"/>
        <end position="72"/>
    </location>
</feature>
<feature type="transmembrane region" description="Helical" evidence="1">
    <location>
        <begin position="85"/>
        <end position="105"/>
    </location>
</feature>
<feature type="transmembrane region" description="Helical" evidence="1">
    <location>
        <begin position="115"/>
        <end position="135"/>
    </location>
</feature>
<sequence length="151" mass="15846">MQPFIFLFILLVIGMMAKNQSLIIAVLFLLIVKSIGLSSKVLPYLEQKGIQLGVTIITIAVLVPIATGKIGFKELAESVRSIYAWIAMLSGIAVALLAKGGVALLAKDPHVTTALVLGTILAVSLFKGVAVGPLIGAGIAYVIMKIVDVFS</sequence>
<dbReference type="EMBL" id="CP000922">
    <property type="protein sequence ID" value="ACJ32887.1"/>
    <property type="status" value="ALT_INIT"/>
    <property type="molecule type" value="Genomic_DNA"/>
</dbReference>
<dbReference type="RefSeq" id="WP_041637927.1">
    <property type="nucleotide sequence ID" value="NC_011567.1"/>
</dbReference>
<dbReference type="SMR" id="B7GGT5"/>
<dbReference type="STRING" id="491915.Aflv_0503"/>
<dbReference type="GeneID" id="7036760"/>
<dbReference type="KEGG" id="afl:Aflv_0503"/>
<dbReference type="PATRIC" id="fig|491915.6.peg.515"/>
<dbReference type="eggNOG" id="COG2707">
    <property type="taxonomic scope" value="Bacteria"/>
</dbReference>
<dbReference type="HOGENOM" id="CLU_125889_1_0_9"/>
<dbReference type="Proteomes" id="UP000000742">
    <property type="component" value="Chromosome"/>
</dbReference>
<dbReference type="GO" id="GO:0005886">
    <property type="term" value="C:plasma membrane"/>
    <property type="evidence" value="ECO:0007669"/>
    <property type="project" value="UniProtKB-SubCell"/>
</dbReference>
<dbReference type="HAMAP" id="MF_01874">
    <property type="entry name" value="UPF0756"/>
    <property type="match status" value="1"/>
</dbReference>
<dbReference type="InterPro" id="IPR007382">
    <property type="entry name" value="UPF0756_TM"/>
</dbReference>
<dbReference type="PANTHER" id="PTHR38452">
    <property type="entry name" value="UPF0756 MEMBRANE PROTEIN YEAL"/>
    <property type="match status" value="1"/>
</dbReference>
<dbReference type="PANTHER" id="PTHR38452:SF1">
    <property type="entry name" value="UPF0756 MEMBRANE PROTEIN YEAL"/>
    <property type="match status" value="1"/>
</dbReference>
<dbReference type="Pfam" id="PF04284">
    <property type="entry name" value="DUF441"/>
    <property type="match status" value="1"/>
</dbReference>
<protein>
    <recommendedName>
        <fullName evidence="1">UPF0756 membrane protein Aflv_0503</fullName>
    </recommendedName>
</protein>
<organism>
    <name type="scientific">Anoxybacillus flavithermus (strain DSM 21510 / WK1)</name>
    <dbReference type="NCBI Taxonomy" id="491915"/>
    <lineage>
        <taxon>Bacteria</taxon>
        <taxon>Bacillati</taxon>
        <taxon>Bacillota</taxon>
        <taxon>Bacilli</taxon>
        <taxon>Bacillales</taxon>
        <taxon>Anoxybacillaceae</taxon>
        <taxon>Anoxybacillus</taxon>
    </lineage>
</organism>
<accession>B7GGT5</accession>
<proteinExistence type="inferred from homology"/>
<name>Y503_ANOFW</name>
<comment type="subcellular location">
    <subcellularLocation>
        <location evidence="1">Cell membrane</location>
        <topology evidence="1">Multi-pass membrane protein</topology>
    </subcellularLocation>
</comment>
<comment type="similarity">
    <text evidence="1">Belongs to the UPF0756 family.</text>
</comment>
<comment type="sequence caution" evidence="2">
    <conflict type="erroneous initiation">
        <sequence resource="EMBL-CDS" id="ACJ32887"/>
    </conflict>
</comment>
<evidence type="ECO:0000255" key="1">
    <source>
        <dbReference type="HAMAP-Rule" id="MF_01874"/>
    </source>
</evidence>
<evidence type="ECO:0000305" key="2"/>
<gene>
    <name type="ordered locus">Aflv_0503</name>
</gene>